<proteinExistence type="inferred from homology"/>
<evidence type="ECO:0000255" key="1">
    <source>
        <dbReference type="HAMAP-Rule" id="MF_01161"/>
    </source>
</evidence>
<organism>
    <name type="scientific">Clostridium acetobutylicum (strain ATCC 824 / DSM 792 / JCM 1419 / IAM 19013 / LMG 5710 / NBRC 13948 / NRRL B-527 / VKM B-1787 / 2291 / W)</name>
    <dbReference type="NCBI Taxonomy" id="272562"/>
    <lineage>
        <taxon>Bacteria</taxon>
        <taxon>Bacillati</taxon>
        <taxon>Bacillota</taxon>
        <taxon>Clostridia</taxon>
        <taxon>Eubacteriales</taxon>
        <taxon>Clostridiaceae</taxon>
        <taxon>Clostridium</taxon>
    </lineage>
</organism>
<gene>
    <name evidence="1" type="primary">tilS</name>
    <name type="ordered locus">CA_C3204</name>
</gene>
<reference key="1">
    <citation type="journal article" date="2001" name="J. Bacteriol.">
        <title>Genome sequence and comparative analysis of the solvent-producing bacterium Clostridium acetobutylicum.</title>
        <authorList>
            <person name="Noelling J."/>
            <person name="Breton G."/>
            <person name="Omelchenko M.V."/>
            <person name="Makarova K.S."/>
            <person name="Zeng Q."/>
            <person name="Gibson R."/>
            <person name="Lee H.M."/>
            <person name="Dubois J."/>
            <person name="Qiu D."/>
            <person name="Hitti J."/>
            <person name="Wolf Y.I."/>
            <person name="Tatusov R.L."/>
            <person name="Sabathe F."/>
            <person name="Doucette-Stamm L.A."/>
            <person name="Soucaille P."/>
            <person name="Daly M.J."/>
            <person name="Bennett G.N."/>
            <person name="Koonin E.V."/>
            <person name="Smith D.R."/>
        </authorList>
    </citation>
    <scope>NUCLEOTIDE SEQUENCE [LARGE SCALE GENOMIC DNA]</scope>
    <source>
        <strain>ATCC 824 / DSM 792 / JCM 1419 / IAM 19013 / LMG 5710 / NBRC 13948 / NRRL B-527 / VKM B-1787 / 2291 / W</strain>
    </source>
</reference>
<sequence length="461" mass="53671">MINDVINTIEKNSMIKQNDRIVVAVSGGPDSICLLHILFKLKDKFNTSICAAHVNHCIRGEAADKDEEYVKKFCEKLDIQFYVKRVDVNKIAHEKKISSEMAGREIRYAFFEEVKERFKANKIAIAHNANDQAETIMMRIIRGTGTEGIKGIRPVRDGYYIRPLIEIRRSSIEKYCEDEKLMPRIDATNLERDYNRNKIRLDLIPYIVKNFNEDIVGALNRLGELVTIDNDYLEKLAKSKYKLYCNECEKQVIISKEAFSNDTAILSRIIRRAVFYLVNSKYNLEKKHIDSIIGCQKNTTGKQINLPNNMRAYNNYGDICLRIKEDESCIGKKEYNLHMDKLNSVHEENLIIGIRLIHNSKDIRLEGNKNVKYFDADKAGKYITLRYRSEGDKFMPFGMKNNKKLKDIFINLKIPREERNKIPLICFGGEIAWITGFKISEKFKIDNNTKKILEIKIEREE</sequence>
<comment type="function">
    <text evidence="1">Ligates lysine onto the cytidine present at position 34 of the AUA codon-specific tRNA(Ile) that contains the anticodon CAU, in an ATP-dependent manner. Cytidine is converted to lysidine, thus changing the amino acid specificity of the tRNA from methionine to isoleucine.</text>
</comment>
<comment type="catalytic activity">
    <reaction evidence="1">
        <text>cytidine(34) in tRNA(Ile2) + L-lysine + ATP = lysidine(34) in tRNA(Ile2) + AMP + diphosphate + H(+)</text>
        <dbReference type="Rhea" id="RHEA:43744"/>
        <dbReference type="Rhea" id="RHEA-COMP:10625"/>
        <dbReference type="Rhea" id="RHEA-COMP:10670"/>
        <dbReference type="ChEBI" id="CHEBI:15378"/>
        <dbReference type="ChEBI" id="CHEBI:30616"/>
        <dbReference type="ChEBI" id="CHEBI:32551"/>
        <dbReference type="ChEBI" id="CHEBI:33019"/>
        <dbReference type="ChEBI" id="CHEBI:82748"/>
        <dbReference type="ChEBI" id="CHEBI:83665"/>
        <dbReference type="ChEBI" id="CHEBI:456215"/>
        <dbReference type="EC" id="6.3.4.19"/>
    </reaction>
</comment>
<comment type="subcellular location">
    <subcellularLocation>
        <location evidence="1">Cytoplasm</location>
    </subcellularLocation>
</comment>
<comment type="domain">
    <text>The N-terminal region contains the highly conserved SGGXDS motif, predicted to be a P-loop motif involved in ATP binding.</text>
</comment>
<comment type="similarity">
    <text evidence="1">Belongs to the tRNA(Ile)-lysidine synthase family.</text>
</comment>
<name>TILS_CLOAB</name>
<dbReference type="EC" id="6.3.4.19" evidence="1"/>
<dbReference type="EMBL" id="AE001437">
    <property type="protein sequence ID" value="AAK81140.1"/>
    <property type="molecule type" value="Genomic_DNA"/>
</dbReference>
<dbReference type="PIR" id="A97294">
    <property type="entry name" value="A97294"/>
</dbReference>
<dbReference type="RefSeq" id="NP_349800.1">
    <property type="nucleotide sequence ID" value="NC_003030.1"/>
</dbReference>
<dbReference type="RefSeq" id="WP_010966480.1">
    <property type="nucleotide sequence ID" value="NC_003030.1"/>
</dbReference>
<dbReference type="SMR" id="Q97EB0"/>
<dbReference type="STRING" id="272562.CA_C3204"/>
<dbReference type="GeneID" id="44999697"/>
<dbReference type="KEGG" id="cac:CA_C3204"/>
<dbReference type="PATRIC" id="fig|272562.8.peg.3383"/>
<dbReference type="eggNOG" id="COG0037">
    <property type="taxonomic scope" value="Bacteria"/>
</dbReference>
<dbReference type="HOGENOM" id="CLU_018869_0_1_9"/>
<dbReference type="OrthoDB" id="9807403at2"/>
<dbReference type="Proteomes" id="UP000000814">
    <property type="component" value="Chromosome"/>
</dbReference>
<dbReference type="GO" id="GO:0005737">
    <property type="term" value="C:cytoplasm"/>
    <property type="evidence" value="ECO:0007669"/>
    <property type="project" value="UniProtKB-SubCell"/>
</dbReference>
<dbReference type="GO" id="GO:0005524">
    <property type="term" value="F:ATP binding"/>
    <property type="evidence" value="ECO:0007669"/>
    <property type="project" value="UniProtKB-UniRule"/>
</dbReference>
<dbReference type="GO" id="GO:0032267">
    <property type="term" value="F:tRNA(Ile)-lysidine synthase activity"/>
    <property type="evidence" value="ECO:0007669"/>
    <property type="project" value="UniProtKB-EC"/>
</dbReference>
<dbReference type="GO" id="GO:0006400">
    <property type="term" value="P:tRNA modification"/>
    <property type="evidence" value="ECO:0007669"/>
    <property type="project" value="UniProtKB-UniRule"/>
</dbReference>
<dbReference type="CDD" id="cd01992">
    <property type="entry name" value="TilS_N"/>
    <property type="match status" value="1"/>
</dbReference>
<dbReference type="Gene3D" id="1.20.59.20">
    <property type="match status" value="1"/>
</dbReference>
<dbReference type="Gene3D" id="3.40.50.620">
    <property type="entry name" value="HUPs"/>
    <property type="match status" value="1"/>
</dbReference>
<dbReference type="HAMAP" id="MF_01161">
    <property type="entry name" value="tRNA_Ile_lys_synt"/>
    <property type="match status" value="1"/>
</dbReference>
<dbReference type="InterPro" id="IPR012796">
    <property type="entry name" value="Lysidine-tRNA-synth_C"/>
</dbReference>
<dbReference type="InterPro" id="IPR014729">
    <property type="entry name" value="Rossmann-like_a/b/a_fold"/>
</dbReference>
<dbReference type="InterPro" id="IPR011063">
    <property type="entry name" value="TilS/TtcA_N"/>
</dbReference>
<dbReference type="InterPro" id="IPR012094">
    <property type="entry name" value="tRNA_Ile_lys_synt"/>
</dbReference>
<dbReference type="InterPro" id="IPR012795">
    <property type="entry name" value="tRNA_Ile_lys_synt_N"/>
</dbReference>
<dbReference type="NCBIfam" id="TIGR02433">
    <property type="entry name" value="lysidine_TilS_C"/>
    <property type="match status" value="1"/>
</dbReference>
<dbReference type="NCBIfam" id="TIGR02432">
    <property type="entry name" value="lysidine_TilS_N"/>
    <property type="match status" value="1"/>
</dbReference>
<dbReference type="PANTHER" id="PTHR43033">
    <property type="entry name" value="TRNA(ILE)-LYSIDINE SYNTHASE-RELATED"/>
    <property type="match status" value="1"/>
</dbReference>
<dbReference type="PANTHER" id="PTHR43033:SF1">
    <property type="entry name" value="TRNA(ILE)-LYSIDINE SYNTHASE-RELATED"/>
    <property type="match status" value="1"/>
</dbReference>
<dbReference type="Pfam" id="PF01171">
    <property type="entry name" value="ATP_bind_3"/>
    <property type="match status" value="1"/>
</dbReference>
<dbReference type="Pfam" id="PF11734">
    <property type="entry name" value="TilS_C"/>
    <property type="match status" value="1"/>
</dbReference>
<dbReference type="SMART" id="SM00977">
    <property type="entry name" value="TilS_C"/>
    <property type="match status" value="1"/>
</dbReference>
<dbReference type="SUPFAM" id="SSF52402">
    <property type="entry name" value="Adenine nucleotide alpha hydrolases-like"/>
    <property type="match status" value="1"/>
</dbReference>
<dbReference type="SUPFAM" id="SSF82829">
    <property type="entry name" value="MesJ substrate recognition domain-like"/>
    <property type="match status" value="1"/>
</dbReference>
<dbReference type="SUPFAM" id="SSF56037">
    <property type="entry name" value="PheT/TilS domain"/>
    <property type="match status" value="1"/>
</dbReference>
<accession>Q97EB0</accession>
<keyword id="KW-0067">ATP-binding</keyword>
<keyword id="KW-0963">Cytoplasm</keyword>
<keyword id="KW-0436">Ligase</keyword>
<keyword id="KW-0547">Nucleotide-binding</keyword>
<keyword id="KW-1185">Reference proteome</keyword>
<keyword id="KW-0819">tRNA processing</keyword>
<feature type="chain" id="PRO_0000181679" description="tRNA(Ile)-lysidine synthase">
    <location>
        <begin position="1"/>
        <end position="461"/>
    </location>
</feature>
<feature type="binding site" evidence="1">
    <location>
        <begin position="26"/>
        <end position="31"/>
    </location>
    <ligand>
        <name>ATP</name>
        <dbReference type="ChEBI" id="CHEBI:30616"/>
    </ligand>
</feature>
<protein>
    <recommendedName>
        <fullName evidence="1">tRNA(Ile)-lysidine synthase</fullName>
        <ecNumber evidence="1">6.3.4.19</ecNumber>
    </recommendedName>
    <alternativeName>
        <fullName evidence="1">tRNA(Ile)-2-lysyl-cytidine synthase</fullName>
    </alternativeName>
    <alternativeName>
        <fullName evidence="1">tRNA(Ile)-lysidine synthetase</fullName>
    </alternativeName>
</protein>